<gene>
    <name evidence="1" type="primary">der</name>
    <name type="synonym">engA</name>
    <name type="ordered locus">Ccur92_04300</name>
    <name type="ORF">CCV52592_1186</name>
</gene>
<dbReference type="EMBL" id="CP000767">
    <property type="protein sequence ID" value="EAU00942.1"/>
    <property type="molecule type" value="Genomic_DNA"/>
</dbReference>
<dbReference type="RefSeq" id="WP_011991928.1">
    <property type="nucleotide sequence ID" value="NC_009715.2"/>
</dbReference>
<dbReference type="SMR" id="A7GWZ2"/>
<dbReference type="STRING" id="360105.CCV52592_1186"/>
<dbReference type="KEGG" id="ccv:CCV52592_1186"/>
<dbReference type="HOGENOM" id="CLU_016077_6_2_7"/>
<dbReference type="OrthoDB" id="9805918at2"/>
<dbReference type="Proteomes" id="UP000006380">
    <property type="component" value="Chromosome"/>
</dbReference>
<dbReference type="GO" id="GO:0005525">
    <property type="term" value="F:GTP binding"/>
    <property type="evidence" value="ECO:0007669"/>
    <property type="project" value="UniProtKB-UniRule"/>
</dbReference>
<dbReference type="GO" id="GO:0043022">
    <property type="term" value="F:ribosome binding"/>
    <property type="evidence" value="ECO:0007669"/>
    <property type="project" value="TreeGrafter"/>
</dbReference>
<dbReference type="GO" id="GO:0042254">
    <property type="term" value="P:ribosome biogenesis"/>
    <property type="evidence" value="ECO:0007669"/>
    <property type="project" value="UniProtKB-KW"/>
</dbReference>
<dbReference type="CDD" id="cd01894">
    <property type="entry name" value="EngA1"/>
    <property type="match status" value="1"/>
</dbReference>
<dbReference type="CDD" id="cd01895">
    <property type="entry name" value="EngA2"/>
    <property type="match status" value="1"/>
</dbReference>
<dbReference type="FunFam" id="3.30.300.20:FF:000004">
    <property type="entry name" value="GTPase Der"/>
    <property type="match status" value="1"/>
</dbReference>
<dbReference type="FunFam" id="3.40.50.300:FF:000494">
    <property type="entry name" value="tRNA modification GTPase MnmE"/>
    <property type="match status" value="1"/>
</dbReference>
<dbReference type="Gene3D" id="3.30.300.20">
    <property type="match status" value="1"/>
</dbReference>
<dbReference type="Gene3D" id="3.40.50.300">
    <property type="entry name" value="P-loop containing nucleotide triphosphate hydrolases"/>
    <property type="match status" value="2"/>
</dbReference>
<dbReference type="HAMAP" id="MF_00195">
    <property type="entry name" value="GTPase_Der"/>
    <property type="match status" value="1"/>
</dbReference>
<dbReference type="InterPro" id="IPR031166">
    <property type="entry name" value="G_ENGA"/>
</dbReference>
<dbReference type="InterPro" id="IPR006073">
    <property type="entry name" value="GTP-bd"/>
</dbReference>
<dbReference type="InterPro" id="IPR016484">
    <property type="entry name" value="GTPase_Der"/>
</dbReference>
<dbReference type="InterPro" id="IPR032859">
    <property type="entry name" value="KH_dom-like"/>
</dbReference>
<dbReference type="InterPro" id="IPR015946">
    <property type="entry name" value="KH_dom-like_a/b"/>
</dbReference>
<dbReference type="InterPro" id="IPR027417">
    <property type="entry name" value="P-loop_NTPase"/>
</dbReference>
<dbReference type="InterPro" id="IPR005225">
    <property type="entry name" value="Small_GTP-bd"/>
</dbReference>
<dbReference type="NCBIfam" id="TIGR03594">
    <property type="entry name" value="GTPase_EngA"/>
    <property type="match status" value="1"/>
</dbReference>
<dbReference type="NCBIfam" id="TIGR00231">
    <property type="entry name" value="small_GTP"/>
    <property type="match status" value="2"/>
</dbReference>
<dbReference type="PANTHER" id="PTHR43834">
    <property type="entry name" value="GTPASE DER"/>
    <property type="match status" value="1"/>
</dbReference>
<dbReference type="PANTHER" id="PTHR43834:SF6">
    <property type="entry name" value="GTPASE DER"/>
    <property type="match status" value="1"/>
</dbReference>
<dbReference type="Pfam" id="PF14714">
    <property type="entry name" value="KH_dom-like"/>
    <property type="match status" value="1"/>
</dbReference>
<dbReference type="Pfam" id="PF01926">
    <property type="entry name" value="MMR_HSR1"/>
    <property type="match status" value="2"/>
</dbReference>
<dbReference type="PIRSF" id="PIRSF006485">
    <property type="entry name" value="GTP-binding_EngA"/>
    <property type="match status" value="1"/>
</dbReference>
<dbReference type="PRINTS" id="PR00449">
    <property type="entry name" value="RASTRNSFRMNG"/>
</dbReference>
<dbReference type="SUPFAM" id="SSF52540">
    <property type="entry name" value="P-loop containing nucleoside triphosphate hydrolases"/>
    <property type="match status" value="2"/>
</dbReference>
<dbReference type="PROSITE" id="PS51712">
    <property type="entry name" value="G_ENGA"/>
    <property type="match status" value="2"/>
</dbReference>
<proteinExistence type="inferred from homology"/>
<organism>
    <name type="scientific">Campylobacter curvus (strain 525.92)</name>
    <dbReference type="NCBI Taxonomy" id="360105"/>
    <lineage>
        <taxon>Bacteria</taxon>
        <taxon>Pseudomonadati</taxon>
        <taxon>Campylobacterota</taxon>
        <taxon>Epsilonproteobacteria</taxon>
        <taxon>Campylobacterales</taxon>
        <taxon>Campylobacteraceae</taxon>
        <taxon>Campylobacter</taxon>
    </lineage>
</organism>
<protein>
    <recommendedName>
        <fullName evidence="1">GTPase Der</fullName>
    </recommendedName>
    <alternativeName>
        <fullName evidence="1">GTP-binding protein EngA</fullName>
    </alternativeName>
</protein>
<reference key="1">
    <citation type="submission" date="2007-07" db="EMBL/GenBank/DDBJ databases">
        <title>Genome sequence of Campylobacter curvus 525.92 isolated from human feces.</title>
        <authorList>
            <person name="Fouts D.E."/>
            <person name="Mongodin E.F."/>
            <person name="Puiu D."/>
            <person name="Sebastian Y."/>
            <person name="Miller W.G."/>
            <person name="Mandrell R.E."/>
            <person name="Lastovica A.J."/>
            <person name="Nelson K.E."/>
        </authorList>
    </citation>
    <scope>NUCLEOTIDE SEQUENCE [LARGE SCALE GENOMIC DNA]</scope>
    <source>
        <strain>525.92</strain>
    </source>
</reference>
<comment type="function">
    <text evidence="1">GTPase that plays an essential role in the late steps of ribosome biogenesis.</text>
</comment>
<comment type="subunit">
    <text evidence="1">Associates with the 50S ribosomal subunit.</text>
</comment>
<comment type="similarity">
    <text evidence="1">Belongs to the TRAFAC class TrmE-Era-EngA-EngB-Septin-like GTPase superfamily. EngA (Der) GTPase family.</text>
</comment>
<sequence length="461" mass="52364">MQKIILVGKPNVGKSSLFNRLARQRIAITSEISGTTRDTNKAKIEVEGKDCLLIDSGGLDESSELFKNVKFKTLAEAKNSDIIIYMVDGKMAPSDEDRAIFYELCKLNLPIALVINKIDSKKDEQRAWEFINFGVKEIFEISVSHNTGIDELSQWIAGQLEDDVIKTDESEDFDDFLENFNDEGELESSENFEDRYIRVGIVGRVNVGKSSLLNALVKDARAVVSDIAGTTIDPVNEIYEHEGRIFEFVDTAGIRKRGKIEGIERYALNRTEKILENSDIALLVLDSSEPLTELDERIAGVANKFNLGMIIVLNKWDKSEREFDELVKEIKDRFKFLSYAPIISVSALGKKRIHKLYPLILEVYKNFTQKIQTSKLNEVIEEATKAHPIPREKGKSVKIYYAAQFGFAPPKIALIMNRPKCLHFSYKRYLINKLRQNFELSGVPIVLAPKKRGESDENEEQ</sequence>
<accession>A7GWZ2</accession>
<keyword id="KW-0342">GTP-binding</keyword>
<keyword id="KW-0547">Nucleotide-binding</keyword>
<keyword id="KW-1185">Reference proteome</keyword>
<keyword id="KW-0677">Repeat</keyword>
<keyword id="KW-0690">Ribosome biogenesis</keyword>
<evidence type="ECO:0000255" key="1">
    <source>
        <dbReference type="HAMAP-Rule" id="MF_00195"/>
    </source>
</evidence>
<feature type="chain" id="PRO_1000011591" description="GTPase Der">
    <location>
        <begin position="1"/>
        <end position="461"/>
    </location>
</feature>
<feature type="domain" description="EngA-type G 1">
    <location>
        <begin position="2"/>
        <end position="164"/>
    </location>
</feature>
<feature type="domain" description="EngA-type G 2">
    <location>
        <begin position="197"/>
        <end position="368"/>
    </location>
</feature>
<feature type="domain" description="KH-like" evidence="1">
    <location>
        <begin position="369"/>
        <end position="453"/>
    </location>
</feature>
<feature type="binding site" evidence="1">
    <location>
        <begin position="8"/>
        <end position="15"/>
    </location>
    <ligand>
        <name>GTP</name>
        <dbReference type="ChEBI" id="CHEBI:37565"/>
        <label>1</label>
    </ligand>
</feature>
<feature type="binding site" evidence="1">
    <location>
        <begin position="55"/>
        <end position="59"/>
    </location>
    <ligand>
        <name>GTP</name>
        <dbReference type="ChEBI" id="CHEBI:37565"/>
        <label>1</label>
    </ligand>
</feature>
<feature type="binding site" evidence="1">
    <location>
        <begin position="116"/>
        <end position="119"/>
    </location>
    <ligand>
        <name>GTP</name>
        <dbReference type="ChEBI" id="CHEBI:37565"/>
        <label>1</label>
    </ligand>
</feature>
<feature type="binding site" evidence="1">
    <location>
        <begin position="203"/>
        <end position="210"/>
    </location>
    <ligand>
        <name>GTP</name>
        <dbReference type="ChEBI" id="CHEBI:37565"/>
        <label>2</label>
    </ligand>
</feature>
<feature type="binding site" evidence="1">
    <location>
        <begin position="250"/>
        <end position="254"/>
    </location>
    <ligand>
        <name>GTP</name>
        <dbReference type="ChEBI" id="CHEBI:37565"/>
        <label>2</label>
    </ligand>
</feature>
<feature type="binding site" evidence="1">
    <location>
        <begin position="314"/>
        <end position="317"/>
    </location>
    <ligand>
        <name>GTP</name>
        <dbReference type="ChEBI" id="CHEBI:37565"/>
        <label>2</label>
    </ligand>
</feature>
<name>DER_CAMC5</name>